<accession>D4AYW3</accession>
<sequence length="632" mass="69836">MHGLLLAGLAAALPLGVAGLPARQQSGLSPRGIDINPYRFASMAKYSEHKATSQMVHSFSYSKDDDYVATATKLVKSTFPNMTFRTVKDHYIGTNGIGHVHFKQTAHGIDIDNADFNVNIGRDGKVFTFGNSFYEGEMPKTNPLTKRDFSDPVKALHGAIKTLKLPVKPQSAKAMPMKEAETFKFEGTSGALSDPMAKLVYIQKDGKLHLTWRVETDVGDNWLLSYVDSKETETVHNVVDYVASADYKVFAWGLNDPTEGQPTMIKDPWNTTGTGSPFTWHGDGQMDYTVTRGNNIAAQDNPSGGEQWENNYRPDSPELSFVYEYNEQMEPEQYKDFAITQLFYTTNTFHDVLYSLGFTEEAGNFQMNNNGKGGEGNDFAICNAQDGSGTNNANFATPPDGQNGRMRMYTWTTAQPSRDGDLEAGIVIHEYTHGLSNRLCGGPANSNCLTELEAGGMGEGWGDFYATAIRLKQDDTHDTDYTMGEWAANMQGGIREYPYSTNMQTNPYTYADVQGMDEVHGIGTVWATILYEVLWNLIDEHGMSKNIMPKFVNGAPSDGRNLAMKLVLDGMTLMPCNPNFMQARDAIIDADQALTNGQNKCALMKAFSKRGLGANYKHGKTRVNNFDMPADC</sequence>
<gene>
    <name type="primary">MEP2</name>
    <name type="ORF">ARB_01382</name>
</gene>
<keyword id="KW-0325">Glycoprotein</keyword>
<keyword id="KW-0378">Hydrolase</keyword>
<keyword id="KW-0479">Metal-binding</keyword>
<keyword id="KW-0482">Metalloprotease</keyword>
<keyword id="KW-0645">Protease</keyword>
<keyword id="KW-1185">Reference proteome</keyword>
<keyword id="KW-0964">Secreted</keyword>
<keyword id="KW-0732">Signal</keyword>
<keyword id="KW-0843">Virulence</keyword>
<keyword id="KW-0862">Zinc</keyword>
<keyword id="KW-0865">Zymogen</keyword>
<protein>
    <recommendedName>
        <fullName>Probable extracellular metalloproteinase 2</fullName>
        <ecNumber>3.4.24.-</ecNumber>
    </recommendedName>
    <alternativeName>
        <fullName>Fungalysin MEP2</fullName>
    </alternativeName>
</protein>
<proteinExistence type="inferred from homology"/>
<organism>
    <name type="scientific">Arthroderma benhamiae (strain ATCC MYA-4681 / CBS 112371)</name>
    <name type="common">Trichophyton mentagrophytes</name>
    <dbReference type="NCBI Taxonomy" id="663331"/>
    <lineage>
        <taxon>Eukaryota</taxon>
        <taxon>Fungi</taxon>
        <taxon>Dikarya</taxon>
        <taxon>Ascomycota</taxon>
        <taxon>Pezizomycotina</taxon>
        <taxon>Eurotiomycetes</taxon>
        <taxon>Eurotiomycetidae</taxon>
        <taxon>Onygenales</taxon>
        <taxon>Arthrodermataceae</taxon>
        <taxon>Trichophyton</taxon>
    </lineage>
</organism>
<reference key="1">
    <citation type="journal article" date="2011" name="Genome Biol.">
        <title>Comparative and functional genomics provide insights into the pathogenicity of dermatophytic fungi.</title>
        <authorList>
            <person name="Burmester A."/>
            <person name="Shelest E."/>
            <person name="Gloeckner G."/>
            <person name="Heddergott C."/>
            <person name="Schindler S."/>
            <person name="Staib P."/>
            <person name="Heidel A."/>
            <person name="Felder M."/>
            <person name="Petzold A."/>
            <person name="Szafranski K."/>
            <person name="Feuermann M."/>
            <person name="Pedruzzi I."/>
            <person name="Priebe S."/>
            <person name="Groth M."/>
            <person name="Winkler R."/>
            <person name="Li W."/>
            <person name="Kniemeyer O."/>
            <person name="Schroeckh V."/>
            <person name="Hertweck C."/>
            <person name="Hube B."/>
            <person name="White T.C."/>
            <person name="Platzer M."/>
            <person name="Guthke R."/>
            <person name="Heitman J."/>
            <person name="Woestemeyer J."/>
            <person name="Zipfel P.F."/>
            <person name="Monod M."/>
            <person name="Brakhage A.A."/>
        </authorList>
    </citation>
    <scope>NUCLEOTIDE SEQUENCE [LARGE SCALE GENOMIC DNA]</scope>
    <source>
        <strain>ATCC MYA-4681 / CBS 112371</strain>
    </source>
</reference>
<comment type="function">
    <text evidence="1">Secreted metalloproteinase probably acting as a virulence factor.</text>
</comment>
<comment type="cofactor">
    <cofactor evidence="1">
        <name>Zn(2+)</name>
        <dbReference type="ChEBI" id="CHEBI:29105"/>
    </cofactor>
    <text evidence="1">Binds 1 zinc ion per subunit.</text>
</comment>
<comment type="subcellular location">
    <subcellularLocation>
        <location evidence="1">Secreted</location>
    </subcellularLocation>
</comment>
<comment type="similarity">
    <text evidence="4">Belongs to the peptidase M36 family.</text>
</comment>
<name>MEP2_ARTBC</name>
<feature type="signal peptide" evidence="2">
    <location>
        <begin position="1"/>
        <end position="19"/>
    </location>
</feature>
<feature type="propeptide" id="PRO_0000397726" evidence="1">
    <location>
        <begin position="20"/>
        <end position="244"/>
    </location>
</feature>
<feature type="chain" id="PRO_0000397727" description="Probable extracellular metalloproteinase 2">
    <location>
        <begin position="245"/>
        <end position="632"/>
    </location>
</feature>
<feature type="active site" evidence="3">
    <location>
        <position position="430"/>
    </location>
</feature>
<feature type="binding site" evidence="3">
    <location>
        <position position="429"/>
    </location>
    <ligand>
        <name>Zn(2+)</name>
        <dbReference type="ChEBI" id="CHEBI:29105"/>
        <note>catalytic</note>
    </ligand>
</feature>
<feature type="binding site" evidence="3">
    <location>
        <position position="433"/>
    </location>
    <ligand>
        <name>Zn(2+)</name>
        <dbReference type="ChEBI" id="CHEBI:29105"/>
        <note>catalytic</note>
    </ligand>
</feature>
<feature type="glycosylation site" description="N-linked (GlcNAc...) asparagine" evidence="2">
    <location>
        <position position="81"/>
    </location>
</feature>
<feature type="glycosylation site" description="N-linked (GlcNAc...) asparagine" evidence="2">
    <location>
        <position position="270"/>
    </location>
</feature>
<evidence type="ECO:0000250" key="1"/>
<evidence type="ECO:0000255" key="2"/>
<evidence type="ECO:0000255" key="3">
    <source>
        <dbReference type="PROSITE-ProRule" id="PRU10095"/>
    </source>
</evidence>
<evidence type="ECO:0000305" key="4"/>
<dbReference type="EC" id="3.4.24.-"/>
<dbReference type="EMBL" id="ABSU01000019">
    <property type="protein sequence ID" value="EFE31783.1"/>
    <property type="molecule type" value="Genomic_DNA"/>
</dbReference>
<dbReference type="RefSeq" id="XP_003012423.1">
    <property type="nucleotide sequence ID" value="XM_003012377.1"/>
</dbReference>
<dbReference type="SMR" id="D4AYW3"/>
<dbReference type="MEROPS" id="M36.001"/>
<dbReference type="GlyCosmos" id="D4AYW3">
    <property type="glycosylation" value="2 sites, No reported glycans"/>
</dbReference>
<dbReference type="GeneID" id="9520072"/>
<dbReference type="KEGG" id="abe:ARB_01382"/>
<dbReference type="eggNOG" id="ENOG502QTDC">
    <property type="taxonomic scope" value="Eukaryota"/>
</dbReference>
<dbReference type="HOGENOM" id="CLU_012703_3_0_1"/>
<dbReference type="OMA" id="NDFAICN"/>
<dbReference type="OrthoDB" id="3227768at2759"/>
<dbReference type="Proteomes" id="UP000008866">
    <property type="component" value="Unassembled WGS sequence"/>
</dbReference>
<dbReference type="GO" id="GO:0005576">
    <property type="term" value="C:extracellular region"/>
    <property type="evidence" value="ECO:0007669"/>
    <property type="project" value="UniProtKB-SubCell"/>
</dbReference>
<dbReference type="GO" id="GO:0004222">
    <property type="term" value="F:metalloendopeptidase activity"/>
    <property type="evidence" value="ECO:0007669"/>
    <property type="project" value="InterPro"/>
</dbReference>
<dbReference type="GO" id="GO:0008270">
    <property type="term" value="F:zinc ion binding"/>
    <property type="evidence" value="ECO:0007669"/>
    <property type="project" value="InterPro"/>
</dbReference>
<dbReference type="GO" id="GO:0006508">
    <property type="term" value="P:proteolysis"/>
    <property type="evidence" value="ECO:0007669"/>
    <property type="project" value="UniProtKB-KW"/>
</dbReference>
<dbReference type="CDD" id="cd09596">
    <property type="entry name" value="M36"/>
    <property type="match status" value="1"/>
</dbReference>
<dbReference type="Gene3D" id="3.10.170.10">
    <property type="match status" value="1"/>
</dbReference>
<dbReference type="Gene3D" id="1.10.390.10">
    <property type="entry name" value="Neutral Protease Domain 2"/>
    <property type="match status" value="1"/>
</dbReference>
<dbReference type="InterPro" id="IPR011096">
    <property type="entry name" value="FTP_domain"/>
</dbReference>
<dbReference type="InterPro" id="IPR050371">
    <property type="entry name" value="Fungal_virulence_M36"/>
</dbReference>
<dbReference type="InterPro" id="IPR001842">
    <property type="entry name" value="Peptidase_M36"/>
</dbReference>
<dbReference type="InterPro" id="IPR027268">
    <property type="entry name" value="Peptidase_M4/M1_CTD_sf"/>
</dbReference>
<dbReference type="PANTHER" id="PTHR33478">
    <property type="entry name" value="EXTRACELLULAR METALLOPROTEINASE MEP"/>
    <property type="match status" value="1"/>
</dbReference>
<dbReference type="PANTHER" id="PTHR33478:SF1">
    <property type="entry name" value="EXTRACELLULAR METALLOPROTEINASE MEP"/>
    <property type="match status" value="1"/>
</dbReference>
<dbReference type="Pfam" id="PF07504">
    <property type="entry name" value="FTP"/>
    <property type="match status" value="1"/>
</dbReference>
<dbReference type="Pfam" id="PF02128">
    <property type="entry name" value="Peptidase_M36"/>
    <property type="match status" value="1"/>
</dbReference>
<dbReference type="PRINTS" id="PR00999">
    <property type="entry name" value="FUNGALYSIN"/>
</dbReference>
<dbReference type="SUPFAM" id="SSF55486">
    <property type="entry name" value="Metalloproteases ('zincins'), catalytic domain"/>
    <property type="match status" value="1"/>
</dbReference>
<dbReference type="PROSITE" id="PS00142">
    <property type="entry name" value="ZINC_PROTEASE"/>
    <property type="match status" value="1"/>
</dbReference>